<protein>
    <recommendedName>
        <fullName>D-fructose 1,6-bisphosphatase class 2/sedoheptulose 1,7-bisphosphatase</fullName>
        <shortName>FBPase class 2/SBPase</shortName>
        <ecNumber>3.1.3.11</ecNumber>
        <ecNumber>3.1.3.37</ecNumber>
    </recommendedName>
</protein>
<gene>
    <name type="ordered locus">cce_3974</name>
</gene>
<keyword id="KW-0113">Calvin cycle</keyword>
<keyword id="KW-0119">Carbohydrate metabolism</keyword>
<keyword id="KW-0378">Hydrolase</keyword>
<keyword id="KW-0464">Manganese</keyword>
<keyword id="KW-0479">Metal-binding</keyword>
<keyword id="KW-1185">Reference proteome</keyword>
<evidence type="ECO:0000250" key="1"/>
<evidence type="ECO:0000305" key="2"/>
<reference key="1">
    <citation type="journal article" date="2008" name="Proc. Natl. Acad. Sci. U.S.A.">
        <title>The genome of Cyanothece 51142, a unicellular diazotrophic cyanobacterium important in the marine nitrogen cycle.</title>
        <authorList>
            <person name="Welsh E.A."/>
            <person name="Liberton M."/>
            <person name="Stoeckel J."/>
            <person name="Loh T."/>
            <person name="Elvitigala T."/>
            <person name="Wang C."/>
            <person name="Wollam A."/>
            <person name="Fulton R.S."/>
            <person name="Clifton S.W."/>
            <person name="Jacobs J.M."/>
            <person name="Aurora R."/>
            <person name="Ghosh B.K."/>
            <person name="Sherman L.A."/>
            <person name="Smith R.D."/>
            <person name="Wilson R.K."/>
            <person name="Pakrasi H.B."/>
        </authorList>
    </citation>
    <scope>NUCLEOTIDE SEQUENCE [LARGE SCALE GENOMIC DNA]</scope>
    <source>
        <strain>ATCC 51142 / BH68</strain>
    </source>
</reference>
<feature type="chain" id="PRO_0000342710" description="D-fructose 1,6-bisphosphatase class 2/sedoheptulose 1,7-bisphosphatase">
    <location>
        <begin position="1"/>
        <end position="345"/>
    </location>
</feature>
<feature type="binding site" evidence="1">
    <location>
        <position position="33"/>
    </location>
    <ligand>
        <name>Mn(2+)</name>
        <dbReference type="ChEBI" id="CHEBI:29035"/>
        <label>1</label>
    </ligand>
</feature>
<feature type="binding site" evidence="1">
    <location>
        <position position="57"/>
    </location>
    <ligand>
        <name>Mn(2+)</name>
        <dbReference type="ChEBI" id="CHEBI:29035"/>
        <label>1</label>
    </ligand>
</feature>
<feature type="binding site" evidence="1">
    <location>
        <position position="97"/>
    </location>
    <ligand>
        <name>Mn(2+)</name>
        <dbReference type="ChEBI" id="CHEBI:29035"/>
        <label>2</label>
    </ligand>
</feature>
<feature type="binding site" evidence="1">
    <location>
        <begin position="100"/>
        <end position="102"/>
    </location>
    <ligand>
        <name>substrate</name>
    </ligand>
</feature>
<feature type="binding site" evidence="1">
    <location>
        <position position="100"/>
    </location>
    <ligand>
        <name>Mn(2+)</name>
        <dbReference type="ChEBI" id="CHEBI:29035"/>
        <label>2</label>
    </ligand>
</feature>
<feature type="binding site" evidence="1">
    <location>
        <position position="131"/>
    </location>
    <ligand>
        <name>substrate</name>
    </ligand>
</feature>
<feature type="binding site" evidence="1">
    <location>
        <begin position="176"/>
        <end position="178"/>
    </location>
    <ligand>
        <name>substrate</name>
    </ligand>
</feature>
<feature type="binding site" evidence="1">
    <location>
        <begin position="198"/>
        <end position="200"/>
    </location>
    <ligand>
        <name>substrate</name>
    </ligand>
</feature>
<feature type="binding site" evidence="1">
    <location>
        <position position="225"/>
    </location>
    <ligand>
        <name>Mn(2+)</name>
        <dbReference type="ChEBI" id="CHEBI:29035"/>
        <label>2</label>
    </ligand>
</feature>
<dbReference type="EC" id="3.1.3.11"/>
<dbReference type="EC" id="3.1.3.37"/>
<dbReference type="EMBL" id="CP000806">
    <property type="protein sequence ID" value="ACB53322.1"/>
    <property type="molecule type" value="Genomic_DNA"/>
</dbReference>
<dbReference type="RefSeq" id="WP_009543933.1">
    <property type="nucleotide sequence ID" value="NC_010546.1"/>
</dbReference>
<dbReference type="SMR" id="B1WQ07"/>
<dbReference type="STRING" id="43989.cce_3974"/>
<dbReference type="KEGG" id="cyt:cce_3974"/>
<dbReference type="eggNOG" id="COG1494">
    <property type="taxonomic scope" value="Bacteria"/>
</dbReference>
<dbReference type="HOGENOM" id="CLU_054938_0_0_3"/>
<dbReference type="OrthoDB" id="9779353at2"/>
<dbReference type="UniPathway" id="UPA00116"/>
<dbReference type="Proteomes" id="UP000001203">
    <property type="component" value="Chromosome circular"/>
</dbReference>
<dbReference type="GO" id="GO:0005829">
    <property type="term" value="C:cytosol"/>
    <property type="evidence" value="ECO:0007669"/>
    <property type="project" value="TreeGrafter"/>
</dbReference>
<dbReference type="GO" id="GO:0042132">
    <property type="term" value="F:fructose 1,6-bisphosphate 1-phosphatase activity"/>
    <property type="evidence" value="ECO:0007669"/>
    <property type="project" value="UniProtKB-EC"/>
</dbReference>
<dbReference type="GO" id="GO:0046872">
    <property type="term" value="F:metal ion binding"/>
    <property type="evidence" value="ECO:0007669"/>
    <property type="project" value="UniProtKB-KW"/>
</dbReference>
<dbReference type="GO" id="GO:0050278">
    <property type="term" value="F:sedoheptulose-bisphosphatase activity"/>
    <property type="evidence" value="ECO:0007669"/>
    <property type="project" value="UniProtKB-EC"/>
</dbReference>
<dbReference type="GO" id="GO:0030388">
    <property type="term" value="P:fructose 1,6-bisphosphate metabolic process"/>
    <property type="evidence" value="ECO:0007669"/>
    <property type="project" value="TreeGrafter"/>
</dbReference>
<dbReference type="GO" id="GO:0006094">
    <property type="term" value="P:gluconeogenesis"/>
    <property type="evidence" value="ECO:0007669"/>
    <property type="project" value="InterPro"/>
</dbReference>
<dbReference type="GO" id="GO:0006071">
    <property type="term" value="P:glycerol metabolic process"/>
    <property type="evidence" value="ECO:0007669"/>
    <property type="project" value="InterPro"/>
</dbReference>
<dbReference type="GO" id="GO:0019253">
    <property type="term" value="P:reductive pentose-phosphate cycle"/>
    <property type="evidence" value="ECO:0007669"/>
    <property type="project" value="UniProtKB-UniPathway"/>
</dbReference>
<dbReference type="CDD" id="cd01516">
    <property type="entry name" value="FBPase_glpX"/>
    <property type="match status" value="1"/>
</dbReference>
<dbReference type="FunFam" id="3.40.190.90:FF:000001">
    <property type="entry name" value="Fructose-1,6-bisphosphatase"/>
    <property type="match status" value="1"/>
</dbReference>
<dbReference type="Gene3D" id="3.40.190.90">
    <property type="match status" value="1"/>
</dbReference>
<dbReference type="Gene3D" id="3.30.540.10">
    <property type="entry name" value="Fructose-1,6-Bisphosphatase, subunit A, domain 1"/>
    <property type="match status" value="1"/>
</dbReference>
<dbReference type="InterPro" id="IPR004464">
    <property type="entry name" value="FBPase_class-2/SBPase"/>
</dbReference>
<dbReference type="NCBIfam" id="TIGR00330">
    <property type="entry name" value="glpX"/>
    <property type="match status" value="1"/>
</dbReference>
<dbReference type="PANTHER" id="PTHR30447:SF0">
    <property type="entry name" value="FRUCTOSE-1,6-BISPHOSPHATASE 1 CLASS 2-RELATED"/>
    <property type="match status" value="1"/>
</dbReference>
<dbReference type="PANTHER" id="PTHR30447">
    <property type="entry name" value="FRUCTOSE-1,6-BISPHOSPHATASE CLASS 2"/>
    <property type="match status" value="1"/>
</dbReference>
<dbReference type="Pfam" id="PF03320">
    <property type="entry name" value="FBPase_glpX"/>
    <property type="match status" value="1"/>
</dbReference>
<dbReference type="PIRSF" id="PIRSF004532">
    <property type="entry name" value="GlpX"/>
    <property type="match status" value="1"/>
</dbReference>
<dbReference type="SUPFAM" id="SSF56655">
    <property type="entry name" value="Carbohydrate phosphatase"/>
    <property type="match status" value="1"/>
</dbReference>
<proteinExistence type="inferred from homology"/>
<organism>
    <name type="scientific">Crocosphaera subtropica (strain ATCC 51142 / BH68)</name>
    <name type="common">Cyanothece sp. (strain ATCC 51142)</name>
    <dbReference type="NCBI Taxonomy" id="43989"/>
    <lineage>
        <taxon>Bacteria</taxon>
        <taxon>Bacillati</taxon>
        <taxon>Cyanobacteriota</taxon>
        <taxon>Cyanophyceae</taxon>
        <taxon>Oscillatoriophycideae</taxon>
        <taxon>Chroococcales</taxon>
        <taxon>Aphanothecaceae</taxon>
        <taxon>Crocosphaera</taxon>
        <taxon>Crocosphaera subtropica</taxon>
    </lineage>
</organism>
<accession>B1WQ07</accession>
<name>FBSB_CROS5</name>
<comment type="function">
    <text evidence="1">Catalyzes the hydrolysis of fructose 1,6-bisphosphate (Fru 1,6-P2) and sedoheptulose 1,7-bisphosphate (Sed 1,7-P2) to fructose 6-phosphate and sedoheptulose 7-phosphate, respectively.</text>
</comment>
<comment type="catalytic activity">
    <reaction>
        <text>beta-D-fructose 1,6-bisphosphate + H2O = beta-D-fructose 6-phosphate + phosphate</text>
        <dbReference type="Rhea" id="RHEA:11064"/>
        <dbReference type="ChEBI" id="CHEBI:15377"/>
        <dbReference type="ChEBI" id="CHEBI:32966"/>
        <dbReference type="ChEBI" id="CHEBI:43474"/>
        <dbReference type="ChEBI" id="CHEBI:57634"/>
        <dbReference type="EC" id="3.1.3.11"/>
    </reaction>
</comment>
<comment type="catalytic activity">
    <reaction>
        <text>D-sedoheptulose 1,7-bisphosphate + H2O = D-sedoheptulose 7-phosphate + phosphate</text>
        <dbReference type="Rhea" id="RHEA:17461"/>
        <dbReference type="ChEBI" id="CHEBI:15377"/>
        <dbReference type="ChEBI" id="CHEBI:43474"/>
        <dbReference type="ChEBI" id="CHEBI:57483"/>
        <dbReference type="ChEBI" id="CHEBI:58335"/>
        <dbReference type="EC" id="3.1.3.37"/>
    </reaction>
</comment>
<comment type="cofactor">
    <cofactor evidence="1">
        <name>Mn(2+)</name>
        <dbReference type="ChEBI" id="CHEBI:29035"/>
    </cofactor>
</comment>
<comment type="pathway">
    <text>Carbohydrate biosynthesis; Calvin cycle.</text>
</comment>
<comment type="subunit">
    <text evidence="1">Homotetramer.</text>
</comment>
<comment type="similarity">
    <text evidence="2">Belongs to the FBPase class 2 family.</text>
</comment>
<sequence>MESTLGLEIIEVVEQAAIASAKWMGKGEKNTADQVAVEAMRERMNQIHMRGRIVIGEGERDDAPMLYIGEEVGICTREDAKAYCNPEELIEIDIAVDPCEGTNLVAYGQNGSMAVLAISEKGGLFAAPDFYMKKLAAPPAAKGKVDINKSATENLKILGECLERTVEELVVVVMDRPRHKELIQEIRDAGARVRLISDGDVSAAISCGFAGTNIHALMGIGAAPEGVISAAAMRCLGGHFQGQLIYDPEVVKTGLIGESREGNIARLKEMGIDDPDRVYTDSELASGETVLFAACGITPGTLMEGVRFFHGGARTQSLVISSQSKTARFVDTIHIQEQPKYIELK</sequence>